<keyword id="KW-0175">Coiled coil</keyword>
<keyword id="KW-0539">Nucleus</keyword>
<keyword id="KW-1185">Reference proteome</keyword>
<keyword id="KW-0690">Ribosome biogenesis</keyword>
<keyword id="KW-0698">rRNA processing</keyword>
<dbReference type="EMBL" id="CH408029">
    <property type="protein sequence ID" value="EAQ93403.1"/>
    <property type="status" value="ALT_SEQ"/>
    <property type="molecule type" value="Genomic_DNA"/>
</dbReference>
<dbReference type="RefSeq" id="XP_001220859.1">
    <property type="nucleotide sequence ID" value="XM_001220858.1"/>
</dbReference>
<dbReference type="SMR" id="Q2HDR6"/>
<dbReference type="STRING" id="306901.Q2HDR6"/>
<dbReference type="GeneID" id="4387084"/>
<dbReference type="VEuPathDB" id="FungiDB:CHGG_01638"/>
<dbReference type="eggNOG" id="ENOG502S7VB">
    <property type="taxonomic scope" value="Eukaryota"/>
</dbReference>
<dbReference type="HOGENOM" id="CLU_1547361_0_0_1"/>
<dbReference type="InParanoid" id="Q2HDR6"/>
<dbReference type="OrthoDB" id="3942380at2759"/>
<dbReference type="Proteomes" id="UP000001056">
    <property type="component" value="Unassembled WGS sequence"/>
</dbReference>
<dbReference type="GO" id="GO:0005730">
    <property type="term" value="C:nucleolus"/>
    <property type="evidence" value="ECO:0007669"/>
    <property type="project" value="UniProtKB-SubCell"/>
</dbReference>
<dbReference type="GO" id="GO:0006364">
    <property type="term" value="P:rRNA processing"/>
    <property type="evidence" value="ECO:0007669"/>
    <property type="project" value="UniProtKB-KW"/>
</dbReference>
<dbReference type="InterPro" id="IPR005579">
    <property type="entry name" value="Cgr1-like"/>
</dbReference>
<dbReference type="Pfam" id="PF03879">
    <property type="entry name" value="Cgr1"/>
    <property type="match status" value="1"/>
</dbReference>
<proteinExistence type="inferred from homology"/>
<gene>
    <name type="primary">CGR1</name>
    <name type="ORF">CHGG_01638</name>
</gene>
<reference key="1">
    <citation type="journal article" date="2015" name="Genome Announc.">
        <title>Draft genome sequence of the cellulolytic fungus Chaetomium globosum.</title>
        <authorList>
            <person name="Cuomo C.A."/>
            <person name="Untereiner W.A."/>
            <person name="Ma L.-J."/>
            <person name="Grabherr M."/>
            <person name="Birren B.W."/>
        </authorList>
    </citation>
    <scope>NUCLEOTIDE SEQUENCE [LARGE SCALE GENOMIC DNA]</scope>
    <source>
        <strain>ATCC 6205 / CBS 148.51 / DSM 1962 / NBRC 6347 / NRRL 1970</strain>
    </source>
</reference>
<comment type="function">
    <text evidence="1">Involved in nucleolar integrity and required for processing of the pre-rRNA for the 60S ribosome subunit.</text>
</comment>
<comment type="subcellular location">
    <subcellularLocation>
        <location evidence="1">Nucleus</location>
        <location evidence="1">Nucleolus</location>
    </subcellularLocation>
</comment>
<comment type="similarity">
    <text evidence="4">Belongs to the CGR1 family.</text>
</comment>
<comment type="sequence caution" evidence="4">
    <conflict type="erroneous gene model prediction">
        <sequence resource="EMBL-CDS" id="EAQ93403"/>
    </conflict>
</comment>
<feature type="chain" id="PRO_0000278951" description="rRNA-processing protein CGR1">
    <location>
        <begin position="1"/>
        <end position="120"/>
    </location>
</feature>
<feature type="region of interest" description="Disordered" evidence="3">
    <location>
        <begin position="1"/>
        <end position="47"/>
    </location>
</feature>
<feature type="coiled-coil region" evidence="2">
    <location>
        <begin position="54"/>
        <end position="114"/>
    </location>
</feature>
<feature type="compositionally biased region" description="Basic residues" evidence="3">
    <location>
        <begin position="24"/>
        <end position="36"/>
    </location>
</feature>
<name>CGR1_CHAGB</name>
<evidence type="ECO:0000250" key="1"/>
<evidence type="ECO:0000255" key="2"/>
<evidence type="ECO:0000256" key="3">
    <source>
        <dbReference type="SAM" id="MobiDB-lite"/>
    </source>
</evidence>
<evidence type="ECO:0000305" key="4"/>
<protein>
    <recommendedName>
        <fullName>rRNA-processing protein CGR1</fullName>
    </recommendedName>
</protein>
<accession>Q2HDR6</accession>
<sequence length="120" mass="13784">MSTTIVDGAQAPESAVTKPLGMRKNGKQWHAPKKAFRPGSGLTSYEQRAKTRVAQAATKAKEKELKEEKEAERKRRMQALVEKRAAKAEKERYELLAAKMHKKRLERLKRKEKRNKVLNS</sequence>
<organism>
    <name type="scientific">Chaetomium globosum (strain ATCC 6205 / CBS 148.51 / DSM 1962 / NBRC 6347 / NRRL 1970)</name>
    <name type="common">Soil fungus</name>
    <dbReference type="NCBI Taxonomy" id="306901"/>
    <lineage>
        <taxon>Eukaryota</taxon>
        <taxon>Fungi</taxon>
        <taxon>Dikarya</taxon>
        <taxon>Ascomycota</taxon>
        <taxon>Pezizomycotina</taxon>
        <taxon>Sordariomycetes</taxon>
        <taxon>Sordariomycetidae</taxon>
        <taxon>Sordariales</taxon>
        <taxon>Chaetomiaceae</taxon>
        <taxon>Chaetomium</taxon>
    </lineage>
</organism>